<accession>Q02SG5</accession>
<dbReference type="EMBL" id="CP000438">
    <property type="protein sequence ID" value="ABJ13272.1"/>
    <property type="molecule type" value="Genomic_DNA"/>
</dbReference>
<dbReference type="RefSeq" id="WP_003100311.1">
    <property type="nucleotide sequence ID" value="NZ_CP034244.1"/>
</dbReference>
<dbReference type="SMR" id="Q02SG5"/>
<dbReference type="KEGG" id="pau:PA14_12110"/>
<dbReference type="PseudoCAP" id="PA14_12110"/>
<dbReference type="HOGENOM" id="CLU_161438_1_0_6"/>
<dbReference type="BioCyc" id="PAER208963:G1G74-1006-MONOMER"/>
<dbReference type="Proteomes" id="UP000000653">
    <property type="component" value="Chromosome"/>
</dbReference>
<dbReference type="GO" id="GO:0005829">
    <property type="term" value="C:cytosol"/>
    <property type="evidence" value="ECO:0007669"/>
    <property type="project" value="TreeGrafter"/>
</dbReference>
<dbReference type="FunFam" id="3.30.70.260:FF:000079">
    <property type="entry name" value="UPF0250 protein NCTC10783_06313"/>
    <property type="match status" value="1"/>
</dbReference>
<dbReference type="Gene3D" id="3.30.70.260">
    <property type="match status" value="1"/>
</dbReference>
<dbReference type="HAMAP" id="MF_00659">
    <property type="entry name" value="UPF0250"/>
    <property type="match status" value="1"/>
</dbReference>
<dbReference type="InterPro" id="IPR007454">
    <property type="entry name" value="UPF0250_YbeD-like"/>
</dbReference>
<dbReference type="InterPro" id="IPR027471">
    <property type="entry name" value="YbeD-like_sf"/>
</dbReference>
<dbReference type="NCBIfam" id="NF001486">
    <property type="entry name" value="PRK00341.1"/>
    <property type="match status" value="1"/>
</dbReference>
<dbReference type="PANTHER" id="PTHR38036">
    <property type="entry name" value="UPF0250 PROTEIN YBED"/>
    <property type="match status" value="1"/>
</dbReference>
<dbReference type="PANTHER" id="PTHR38036:SF1">
    <property type="entry name" value="UPF0250 PROTEIN YBED"/>
    <property type="match status" value="1"/>
</dbReference>
<dbReference type="Pfam" id="PF04359">
    <property type="entry name" value="DUF493"/>
    <property type="match status" value="1"/>
</dbReference>
<dbReference type="SUPFAM" id="SSF117991">
    <property type="entry name" value="YbeD/HP0495-like"/>
    <property type="match status" value="1"/>
</dbReference>
<evidence type="ECO:0000255" key="1">
    <source>
        <dbReference type="HAMAP-Rule" id="MF_00659"/>
    </source>
</evidence>
<gene>
    <name type="ordered locus">PA14_12110</name>
</gene>
<comment type="similarity">
    <text evidence="1">Belongs to the UPF0250 family.</text>
</comment>
<sequence>MTDTPDVQPPKIEFPCERYPIKVIGDAGEGFSDLVVEIIQRHAPDLDVETLVVRDSSKGRFLSVQVLITATDVDQLQAIHNDLRATGRVHMVL</sequence>
<name>Y1211_PSEAB</name>
<reference key="1">
    <citation type="journal article" date="2006" name="Genome Biol.">
        <title>Genomic analysis reveals that Pseudomonas aeruginosa virulence is combinatorial.</title>
        <authorList>
            <person name="Lee D.G."/>
            <person name="Urbach J.M."/>
            <person name="Wu G."/>
            <person name="Liberati N.T."/>
            <person name="Feinbaum R.L."/>
            <person name="Miyata S."/>
            <person name="Diggins L.T."/>
            <person name="He J."/>
            <person name="Saucier M."/>
            <person name="Deziel E."/>
            <person name="Friedman L."/>
            <person name="Li L."/>
            <person name="Grills G."/>
            <person name="Montgomery K."/>
            <person name="Kucherlapati R."/>
            <person name="Rahme L.G."/>
            <person name="Ausubel F.M."/>
        </authorList>
    </citation>
    <scope>NUCLEOTIDE SEQUENCE [LARGE SCALE GENOMIC DNA]</scope>
    <source>
        <strain>UCBPP-PA14</strain>
    </source>
</reference>
<feature type="chain" id="PRO_1000061879" description="UPF0250 protein PA14_12110">
    <location>
        <begin position="1"/>
        <end position="93"/>
    </location>
</feature>
<proteinExistence type="inferred from homology"/>
<protein>
    <recommendedName>
        <fullName evidence="1">UPF0250 protein PA14_12110</fullName>
    </recommendedName>
</protein>
<organism>
    <name type="scientific">Pseudomonas aeruginosa (strain UCBPP-PA14)</name>
    <dbReference type="NCBI Taxonomy" id="208963"/>
    <lineage>
        <taxon>Bacteria</taxon>
        <taxon>Pseudomonadati</taxon>
        <taxon>Pseudomonadota</taxon>
        <taxon>Gammaproteobacteria</taxon>
        <taxon>Pseudomonadales</taxon>
        <taxon>Pseudomonadaceae</taxon>
        <taxon>Pseudomonas</taxon>
    </lineage>
</organism>